<reference key="1">
    <citation type="journal article" date="2007" name="PLoS ONE">
        <title>Molecular correlates of host specialization in Staphylococcus aureus.</title>
        <authorList>
            <person name="Herron-Olson L."/>
            <person name="Fitzgerald J.R."/>
            <person name="Musser J.M."/>
            <person name="Kapur V."/>
        </authorList>
    </citation>
    <scope>NUCLEOTIDE SEQUENCE [LARGE SCALE GENOMIC DNA]</scope>
    <source>
        <strain>bovine RF122 / ET3-1</strain>
    </source>
</reference>
<sequence length="372" mass="40145">MLVAVVKELKQGEGRVACTPENVRKLTAAGHKVIVEKNAGIGSGFSNDMYEKEGAKIVTHEQAWEADLVIKVKEPHESEYQYFKKNQIIWGFLHLASSKEIVEKMQGVGVIAISGETIIKNGKAELLAPMSAIAGQRSAIMGAYYSEAQHGGQGTLVTGVHENVDIPGSTYVIFGGGVAATNAANVALGLNAKVIIIELNDDRIKYLEDMYAEKDVTVVKSTPENLAEQIKKADVFISTILIPGAKPPKLVTREMVKSMKKGSVLIDIAIDQGGTIETIRPTTISDPVYEEEGVIHYGVPNQPGAVPRTSTMALAQGNIDYILEICDKGLEQAIKDNEALSAGVNIYQGQETNQGLATSHDLDYKEILNVIE</sequence>
<dbReference type="EC" id="1.4.1.1"/>
<dbReference type="EMBL" id="AJ938182">
    <property type="protein sequence ID" value="CAI80993.1"/>
    <property type="molecule type" value="Genomic_DNA"/>
</dbReference>
<dbReference type="RefSeq" id="WP_000959414.1">
    <property type="nucleotide sequence ID" value="NC_007622.1"/>
</dbReference>
<dbReference type="SMR" id="Q2YY66"/>
<dbReference type="KEGG" id="sab:SAB1304c"/>
<dbReference type="HOGENOM" id="CLU_003376_3_0_9"/>
<dbReference type="UniPathway" id="UPA00527">
    <property type="reaction ID" value="UER00585"/>
</dbReference>
<dbReference type="GO" id="GO:0005886">
    <property type="term" value="C:plasma membrane"/>
    <property type="evidence" value="ECO:0007669"/>
    <property type="project" value="TreeGrafter"/>
</dbReference>
<dbReference type="GO" id="GO:0000286">
    <property type="term" value="F:alanine dehydrogenase activity"/>
    <property type="evidence" value="ECO:0007669"/>
    <property type="project" value="UniProtKB-EC"/>
</dbReference>
<dbReference type="GO" id="GO:0042853">
    <property type="term" value="P:L-alanine catabolic process"/>
    <property type="evidence" value="ECO:0007669"/>
    <property type="project" value="UniProtKB-UniPathway"/>
</dbReference>
<dbReference type="CDD" id="cd05305">
    <property type="entry name" value="L-AlaDH"/>
    <property type="match status" value="1"/>
</dbReference>
<dbReference type="FunFam" id="3.40.50.720:FF:000433">
    <property type="entry name" value="Alanine dehydrogenase 1"/>
    <property type="match status" value="1"/>
</dbReference>
<dbReference type="Gene3D" id="3.40.50.720">
    <property type="entry name" value="NAD(P)-binding Rossmann-like Domain"/>
    <property type="match status" value="2"/>
</dbReference>
<dbReference type="InterPro" id="IPR008141">
    <property type="entry name" value="Ala_DH"/>
</dbReference>
<dbReference type="InterPro" id="IPR008143">
    <property type="entry name" value="Ala_DH/PNT_CS2"/>
</dbReference>
<dbReference type="InterPro" id="IPR007886">
    <property type="entry name" value="AlaDH/PNT_N"/>
</dbReference>
<dbReference type="InterPro" id="IPR007698">
    <property type="entry name" value="AlaDH/PNT_NAD(H)-bd"/>
</dbReference>
<dbReference type="InterPro" id="IPR036291">
    <property type="entry name" value="NAD(P)-bd_dom_sf"/>
</dbReference>
<dbReference type="PANTHER" id="PTHR42795">
    <property type="entry name" value="ALANINE DEHYDROGENASE"/>
    <property type="match status" value="1"/>
</dbReference>
<dbReference type="PANTHER" id="PTHR42795:SF1">
    <property type="entry name" value="ALANINE DEHYDROGENASE"/>
    <property type="match status" value="1"/>
</dbReference>
<dbReference type="Pfam" id="PF01262">
    <property type="entry name" value="AlaDh_PNT_C"/>
    <property type="match status" value="1"/>
</dbReference>
<dbReference type="Pfam" id="PF05222">
    <property type="entry name" value="AlaDh_PNT_N"/>
    <property type="match status" value="1"/>
</dbReference>
<dbReference type="PIRSF" id="PIRSF000183">
    <property type="entry name" value="Alanine_dh"/>
    <property type="match status" value="1"/>
</dbReference>
<dbReference type="SMART" id="SM01002">
    <property type="entry name" value="AlaDh_PNT_C"/>
    <property type="match status" value="1"/>
</dbReference>
<dbReference type="SMART" id="SM01003">
    <property type="entry name" value="AlaDh_PNT_N"/>
    <property type="match status" value="1"/>
</dbReference>
<dbReference type="SUPFAM" id="SSF52283">
    <property type="entry name" value="Formate/glycerate dehydrogenase catalytic domain-like"/>
    <property type="match status" value="1"/>
</dbReference>
<dbReference type="SUPFAM" id="SSF51735">
    <property type="entry name" value="NAD(P)-binding Rossmann-fold domains"/>
    <property type="match status" value="1"/>
</dbReference>
<dbReference type="PROSITE" id="PS00837">
    <property type="entry name" value="ALADH_PNT_2"/>
    <property type="match status" value="1"/>
</dbReference>
<proteinExistence type="inferred from homology"/>
<name>DHA1_STAAB</name>
<gene>
    <name type="primary">ald1</name>
    <name type="ordered locus">SAB1304c</name>
</gene>
<comment type="function">
    <text evidence="1">May play a role in cell wall synthesis as L-alanine is an important constituent of the peptidoglycan layer.</text>
</comment>
<comment type="catalytic activity">
    <reaction>
        <text>L-alanine + NAD(+) + H2O = pyruvate + NH4(+) + NADH + H(+)</text>
        <dbReference type="Rhea" id="RHEA:18405"/>
        <dbReference type="ChEBI" id="CHEBI:15361"/>
        <dbReference type="ChEBI" id="CHEBI:15377"/>
        <dbReference type="ChEBI" id="CHEBI:15378"/>
        <dbReference type="ChEBI" id="CHEBI:28938"/>
        <dbReference type="ChEBI" id="CHEBI:57540"/>
        <dbReference type="ChEBI" id="CHEBI:57945"/>
        <dbReference type="ChEBI" id="CHEBI:57972"/>
        <dbReference type="EC" id="1.4.1.1"/>
    </reaction>
</comment>
<comment type="pathway">
    <text>Amino-acid degradation; L-alanine degradation via dehydrogenase pathway; NH(3) and pyruvate from L-alanine: step 1/1.</text>
</comment>
<comment type="similarity">
    <text evidence="3">Belongs to the AlaDH/PNT family.</text>
</comment>
<feature type="chain" id="PRO_0000287318" description="Alanine dehydrogenase 1">
    <location>
        <begin position="1"/>
        <end position="372"/>
    </location>
</feature>
<feature type="active site" evidence="2">
    <location>
        <position position="94"/>
    </location>
</feature>
<feature type="binding site" evidence="1">
    <location>
        <begin position="170"/>
        <end position="200"/>
    </location>
    <ligand>
        <name>NAD(+)</name>
        <dbReference type="ChEBI" id="CHEBI:57540"/>
    </ligand>
</feature>
<protein>
    <recommendedName>
        <fullName>Alanine dehydrogenase 1</fullName>
        <ecNumber>1.4.1.1</ecNumber>
    </recommendedName>
</protein>
<keyword id="KW-0520">NAD</keyword>
<keyword id="KW-0560">Oxidoreductase</keyword>
<organism>
    <name type="scientific">Staphylococcus aureus (strain bovine RF122 / ET3-1)</name>
    <dbReference type="NCBI Taxonomy" id="273036"/>
    <lineage>
        <taxon>Bacteria</taxon>
        <taxon>Bacillati</taxon>
        <taxon>Bacillota</taxon>
        <taxon>Bacilli</taxon>
        <taxon>Bacillales</taxon>
        <taxon>Staphylococcaceae</taxon>
        <taxon>Staphylococcus</taxon>
    </lineage>
</organism>
<evidence type="ECO:0000250" key="1"/>
<evidence type="ECO:0000255" key="2"/>
<evidence type="ECO:0000305" key="3"/>
<accession>Q2YY66</accession>